<gene>
    <name evidence="1" type="primary">tal</name>
    <name type="ordered locus">CLI_1378</name>
</gene>
<sequence>MKIFIDTANVEEIRKASELGVLSGVTTNPSLIAKEGRDLKEVVEEICSIVDGPISAEVISLEYEKMIEEGRELSKLHKNIVIKIPMCEEGLKAVSVLSKEGIKTNVTLIFSSMQALLAARAGATYVSPFLGRLDDIGNRGIEVVEQIADMFKIHEIKTEIIAASVRTPMHVLEAAMAGSHIATIPYKVIIQMSKHALTDIGIEKFMKDYEKAFGENK</sequence>
<accession>A7GCY3</accession>
<organism>
    <name type="scientific">Clostridium botulinum (strain Langeland / NCTC 10281 / Type F)</name>
    <dbReference type="NCBI Taxonomy" id="441772"/>
    <lineage>
        <taxon>Bacteria</taxon>
        <taxon>Bacillati</taxon>
        <taxon>Bacillota</taxon>
        <taxon>Clostridia</taxon>
        <taxon>Eubacteriales</taxon>
        <taxon>Clostridiaceae</taxon>
        <taxon>Clostridium</taxon>
    </lineage>
</organism>
<keyword id="KW-0963">Cytoplasm</keyword>
<keyword id="KW-0570">Pentose shunt</keyword>
<keyword id="KW-0704">Schiff base</keyword>
<keyword id="KW-0808">Transferase</keyword>
<proteinExistence type="inferred from homology"/>
<comment type="function">
    <text evidence="1">Transaldolase is important for the balance of metabolites in the pentose-phosphate pathway.</text>
</comment>
<comment type="catalytic activity">
    <reaction evidence="1">
        <text>D-sedoheptulose 7-phosphate + D-glyceraldehyde 3-phosphate = D-erythrose 4-phosphate + beta-D-fructose 6-phosphate</text>
        <dbReference type="Rhea" id="RHEA:17053"/>
        <dbReference type="ChEBI" id="CHEBI:16897"/>
        <dbReference type="ChEBI" id="CHEBI:57483"/>
        <dbReference type="ChEBI" id="CHEBI:57634"/>
        <dbReference type="ChEBI" id="CHEBI:59776"/>
        <dbReference type="EC" id="2.2.1.2"/>
    </reaction>
</comment>
<comment type="pathway">
    <text evidence="1">Carbohydrate degradation; pentose phosphate pathway; D-glyceraldehyde 3-phosphate and beta-D-fructose 6-phosphate from D-ribose 5-phosphate and D-xylulose 5-phosphate (non-oxidative stage): step 2/3.</text>
</comment>
<comment type="subcellular location">
    <subcellularLocation>
        <location evidence="1">Cytoplasm</location>
    </subcellularLocation>
</comment>
<comment type="similarity">
    <text evidence="1">Belongs to the transaldolase family. Type 3B subfamily.</text>
</comment>
<feature type="chain" id="PRO_1000126297" description="Probable transaldolase">
    <location>
        <begin position="1"/>
        <end position="217"/>
    </location>
</feature>
<feature type="active site" description="Schiff-base intermediate with substrate" evidence="1">
    <location>
        <position position="83"/>
    </location>
</feature>
<name>TAL_CLOBL</name>
<dbReference type="EC" id="2.2.1.2" evidence="1"/>
<dbReference type="EMBL" id="CP000728">
    <property type="protein sequence ID" value="ABS40977.1"/>
    <property type="molecule type" value="Genomic_DNA"/>
</dbReference>
<dbReference type="RefSeq" id="WP_003399456.1">
    <property type="nucleotide sequence ID" value="NC_009699.1"/>
</dbReference>
<dbReference type="SMR" id="A7GCY3"/>
<dbReference type="KEGG" id="cbf:CLI_1378"/>
<dbReference type="HOGENOM" id="CLU_079764_0_0_9"/>
<dbReference type="UniPathway" id="UPA00115">
    <property type="reaction ID" value="UER00414"/>
</dbReference>
<dbReference type="Proteomes" id="UP000002410">
    <property type="component" value="Chromosome"/>
</dbReference>
<dbReference type="GO" id="GO:0005737">
    <property type="term" value="C:cytoplasm"/>
    <property type="evidence" value="ECO:0007669"/>
    <property type="project" value="UniProtKB-SubCell"/>
</dbReference>
<dbReference type="GO" id="GO:0016832">
    <property type="term" value="F:aldehyde-lyase activity"/>
    <property type="evidence" value="ECO:0007669"/>
    <property type="project" value="InterPro"/>
</dbReference>
<dbReference type="GO" id="GO:0004801">
    <property type="term" value="F:transaldolase activity"/>
    <property type="evidence" value="ECO:0007669"/>
    <property type="project" value="UniProtKB-UniRule"/>
</dbReference>
<dbReference type="GO" id="GO:0005975">
    <property type="term" value="P:carbohydrate metabolic process"/>
    <property type="evidence" value="ECO:0007669"/>
    <property type="project" value="InterPro"/>
</dbReference>
<dbReference type="GO" id="GO:0006098">
    <property type="term" value="P:pentose-phosphate shunt"/>
    <property type="evidence" value="ECO:0007669"/>
    <property type="project" value="UniProtKB-UniRule"/>
</dbReference>
<dbReference type="CDD" id="cd00956">
    <property type="entry name" value="Transaldolase_FSA"/>
    <property type="match status" value="1"/>
</dbReference>
<dbReference type="FunFam" id="3.20.20.70:FF:000018">
    <property type="entry name" value="Probable transaldolase"/>
    <property type="match status" value="1"/>
</dbReference>
<dbReference type="Gene3D" id="3.20.20.70">
    <property type="entry name" value="Aldolase class I"/>
    <property type="match status" value="1"/>
</dbReference>
<dbReference type="HAMAP" id="MF_00494">
    <property type="entry name" value="Transaldolase_3b"/>
    <property type="match status" value="1"/>
</dbReference>
<dbReference type="InterPro" id="IPR013785">
    <property type="entry name" value="Aldolase_TIM"/>
</dbReference>
<dbReference type="InterPro" id="IPR001585">
    <property type="entry name" value="TAL/FSA"/>
</dbReference>
<dbReference type="InterPro" id="IPR022999">
    <property type="entry name" value="Transaldolase_3B"/>
</dbReference>
<dbReference type="InterPro" id="IPR004731">
    <property type="entry name" value="Transaldolase_3B/F6P_aldolase"/>
</dbReference>
<dbReference type="InterPro" id="IPR018225">
    <property type="entry name" value="Transaldolase_AS"/>
</dbReference>
<dbReference type="InterPro" id="IPR033919">
    <property type="entry name" value="TSA/FSA_arc/bac"/>
</dbReference>
<dbReference type="NCBIfam" id="TIGR00875">
    <property type="entry name" value="fsa_talC_mipB"/>
    <property type="match status" value="1"/>
</dbReference>
<dbReference type="PANTHER" id="PTHR10683">
    <property type="entry name" value="TRANSALDOLASE"/>
    <property type="match status" value="1"/>
</dbReference>
<dbReference type="PANTHER" id="PTHR10683:SF36">
    <property type="entry name" value="TRANSALDOLASE"/>
    <property type="match status" value="1"/>
</dbReference>
<dbReference type="Pfam" id="PF00923">
    <property type="entry name" value="TAL_FSA"/>
    <property type="match status" value="1"/>
</dbReference>
<dbReference type="SUPFAM" id="SSF51569">
    <property type="entry name" value="Aldolase"/>
    <property type="match status" value="1"/>
</dbReference>
<dbReference type="PROSITE" id="PS01054">
    <property type="entry name" value="TRANSALDOLASE_1"/>
    <property type="match status" value="1"/>
</dbReference>
<dbReference type="PROSITE" id="PS00958">
    <property type="entry name" value="TRANSALDOLASE_2"/>
    <property type="match status" value="1"/>
</dbReference>
<reference key="1">
    <citation type="submission" date="2007-06" db="EMBL/GenBank/DDBJ databases">
        <authorList>
            <person name="Brinkac L.M."/>
            <person name="Daugherty S."/>
            <person name="Dodson R.J."/>
            <person name="Madupu R."/>
            <person name="Brown J.L."/>
            <person name="Bruce D."/>
            <person name="Detter C."/>
            <person name="Munk C."/>
            <person name="Smith L.A."/>
            <person name="Smith T.J."/>
            <person name="White O."/>
            <person name="Brettin T.S."/>
        </authorList>
    </citation>
    <scope>NUCLEOTIDE SEQUENCE [LARGE SCALE GENOMIC DNA]</scope>
    <source>
        <strain>Langeland / NCTC 10281 / Type F</strain>
    </source>
</reference>
<protein>
    <recommendedName>
        <fullName evidence="1">Probable transaldolase</fullName>
        <ecNumber evidence="1">2.2.1.2</ecNumber>
    </recommendedName>
</protein>
<evidence type="ECO:0000255" key="1">
    <source>
        <dbReference type="HAMAP-Rule" id="MF_00494"/>
    </source>
</evidence>